<evidence type="ECO:0000255" key="1">
    <source>
        <dbReference type="HAMAP-Rule" id="MF_02126"/>
    </source>
</evidence>
<evidence type="ECO:0000256" key="2">
    <source>
        <dbReference type="SAM" id="MobiDB-lite"/>
    </source>
</evidence>
<name>PRMC_STRCO</name>
<accession>Q9K4E3</accession>
<dbReference type="EC" id="2.1.1.297" evidence="1"/>
<dbReference type="EMBL" id="AL939123">
    <property type="protein sequence ID" value="CAB94532.1"/>
    <property type="molecule type" value="Genomic_DNA"/>
</dbReference>
<dbReference type="RefSeq" id="NP_629500.1">
    <property type="nucleotide sequence ID" value="NC_003888.3"/>
</dbReference>
<dbReference type="RefSeq" id="WP_003973636.1">
    <property type="nucleotide sequence ID" value="NZ_VNID01000011.1"/>
</dbReference>
<dbReference type="SMR" id="Q9K4E3"/>
<dbReference type="FunCoup" id="Q9K4E3">
    <property type="interactions" value="355"/>
</dbReference>
<dbReference type="STRING" id="100226.gene:17763013"/>
<dbReference type="PaxDb" id="100226-SCO5361"/>
<dbReference type="GeneID" id="96655355"/>
<dbReference type="KEGG" id="sco:SCO5361"/>
<dbReference type="PATRIC" id="fig|100226.15.peg.5441"/>
<dbReference type="eggNOG" id="COG2890">
    <property type="taxonomic scope" value="Bacteria"/>
</dbReference>
<dbReference type="HOGENOM" id="CLU_018398_4_0_11"/>
<dbReference type="InParanoid" id="Q9K4E3"/>
<dbReference type="OrthoDB" id="9800643at2"/>
<dbReference type="PhylomeDB" id="Q9K4E3"/>
<dbReference type="Proteomes" id="UP000001973">
    <property type="component" value="Chromosome"/>
</dbReference>
<dbReference type="GO" id="GO:0003676">
    <property type="term" value="F:nucleic acid binding"/>
    <property type="evidence" value="ECO:0007669"/>
    <property type="project" value="InterPro"/>
</dbReference>
<dbReference type="GO" id="GO:0102559">
    <property type="term" value="F:protein-(glutamine-N5) methyltransferase activity"/>
    <property type="evidence" value="ECO:0007669"/>
    <property type="project" value="UniProtKB-EC"/>
</dbReference>
<dbReference type="GO" id="GO:0036009">
    <property type="term" value="F:protein-glutamine N-methyltransferase activity"/>
    <property type="evidence" value="ECO:0000318"/>
    <property type="project" value="GO_Central"/>
</dbReference>
<dbReference type="GO" id="GO:0032259">
    <property type="term" value="P:methylation"/>
    <property type="evidence" value="ECO:0007669"/>
    <property type="project" value="UniProtKB-KW"/>
</dbReference>
<dbReference type="GO" id="GO:0006415">
    <property type="term" value="P:translational termination"/>
    <property type="evidence" value="ECO:0000318"/>
    <property type="project" value="GO_Central"/>
</dbReference>
<dbReference type="CDD" id="cd02440">
    <property type="entry name" value="AdoMet_MTases"/>
    <property type="match status" value="1"/>
</dbReference>
<dbReference type="Gene3D" id="1.10.8.10">
    <property type="entry name" value="DNA helicase RuvA subunit, C-terminal domain"/>
    <property type="match status" value="1"/>
</dbReference>
<dbReference type="Gene3D" id="3.40.50.150">
    <property type="entry name" value="Vaccinia Virus protein VP39"/>
    <property type="match status" value="1"/>
</dbReference>
<dbReference type="HAMAP" id="MF_02126">
    <property type="entry name" value="RF_methyltr_PrmC"/>
    <property type="match status" value="1"/>
</dbReference>
<dbReference type="InterPro" id="IPR002052">
    <property type="entry name" value="DNA_methylase_N6_adenine_CS"/>
</dbReference>
<dbReference type="InterPro" id="IPR004556">
    <property type="entry name" value="HemK-like"/>
</dbReference>
<dbReference type="InterPro" id="IPR041698">
    <property type="entry name" value="Methyltransf_25"/>
</dbReference>
<dbReference type="InterPro" id="IPR050320">
    <property type="entry name" value="N5-glutamine_MTase"/>
</dbReference>
<dbReference type="InterPro" id="IPR040758">
    <property type="entry name" value="PrmC_N"/>
</dbReference>
<dbReference type="InterPro" id="IPR019874">
    <property type="entry name" value="RF_methyltr_PrmC"/>
</dbReference>
<dbReference type="InterPro" id="IPR029063">
    <property type="entry name" value="SAM-dependent_MTases_sf"/>
</dbReference>
<dbReference type="NCBIfam" id="TIGR00536">
    <property type="entry name" value="hemK_fam"/>
    <property type="match status" value="1"/>
</dbReference>
<dbReference type="NCBIfam" id="TIGR03534">
    <property type="entry name" value="RF_mod_PrmC"/>
    <property type="match status" value="1"/>
</dbReference>
<dbReference type="PANTHER" id="PTHR18895">
    <property type="entry name" value="HEMK METHYLTRANSFERASE"/>
    <property type="match status" value="1"/>
</dbReference>
<dbReference type="PANTHER" id="PTHR18895:SF74">
    <property type="entry name" value="MTRF1L RELEASE FACTOR GLUTAMINE METHYLTRANSFERASE"/>
    <property type="match status" value="1"/>
</dbReference>
<dbReference type="Pfam" id="PF13649">
    <property type="entry name" value="Methyltransf_25"/>
    <property type="match status" value="1"/>
</dbReference>
<dbReference type="Pfam" id="PF17827">
    <property type="entry name" value="PrmC_N"/>
    <property type="match status" value="1"/>
</dbReference>
<dbReference type="SUPFAM" id="SSF53335">
    <property type="entry name" value="S-adenosyl-L-methionine-dependent methyltransferases"/>
    <property type="match status" value="1"/>
</dbReference>
<keyword id="KW-0489">Methyltransferase</keyword>
<keyword id="KW-1185">Reference proteome</keyword>
<keyword id="KW-0949">S-adenosyl-L-methionine</keyword>
<keyword id="KW-0808">Transferase</keyword>
<gene>
    <name evidence="1" type="primary">prmC</name>
    <name type="ordered locus">SCO5361</name>
</gene>
<proteinExistence type="inferred from homology"/>
<reference key="1">
    <citation type="journal article" date="2002" name="Nature">
        <title>Complete genome sequence of the model actinomycete Streptomyces coelicolor A3(2).</title>
        <authorList>
            <person name="Bentley S.D."/>
            <person name="Chater K.F."/>
            <person name="Cerdeno-Tarraga A.-M."/>
            <person name="Challis G.L."/>
            <person name="Thomson N.R."/>
            <person name="James K.D."/>
            <person name="Harris D.E."/>
            <person name="Quail M.A."/>
            <person name="Kieser H."/>
            <person name="Harper D."/>
            <person name="Bateman A."/>
            <person name="Brown S."/>
            <person name="Chandra G."/>
            <person name="Chen C.W."/>
            <person name="Collins M."/>
            <person name="Cronin A."/>
            <person name="Fraser A."/>
            <person name="Goble A."/>
            <person name="Hidalgo J."/>
            <person name="Hornsby T."/>
            <person name="Howarth S."/>
            <person name="Huang C.-H."/>
            <person name="Kieser T."/>
            <person name="Larke L."/>
            <person name="Murphy L.D."/>
            <person name="Oliver K."/>
            <person name="O'Neil S."/>
            <person name="Rabbinowitsch E."/>
            <person name="Rajandream M.A."/>
            <person name="Rutherford K.M."/>
            <person name="Rutter S."/>
            <person name="Seeger K."/>
            <person name="Saunders D."/>
            <person name="Sharp S."/>
            <person name="Squares R."/>
            <person name="Squares S."/>
            <person name="Taylor K."/>
            <person name="Warren T."/>
            <person name="Wietzorrek A."/>
            <person name="Woodward J.R."/>
            <person name="Barrell B.G."/>
            <person name="Parkhill J."/>
            <person name="Hopwood D.A."/>
        </authorList>
    </citation>
    <scope>NUCLEOTIDE SEQUENCE [LARGE SCALE GENOMIC DNA]</scope>
    <source>
        <strain>ATCC BAA-471 / A3(2) / M145</strain>
    </source>
</reference>
<protein>
    <recommendedName>
        <fullName evidence="1">Release factor glutamine methyltransferase</fullName>
        <shortName evidence="1">RF MTase</shortName>
        <ecNumber evidence="1">2.1.1.297</ecNumber>
    </recommendedName>
    <alternativeName>
        <fullName evidence="1">N5-glutamine methyltransferase PrmC</fullName>
    </alternativeName>
    <alternativeName>
        <fullName evidence="1">Protein-(glutamine-N5) MTase PrmC</fullName>
    </alternativeName>
    <alternativeName>
        <fullName evidence="1">Protein-glutamine N-methyltransferase PrmC</fullName>
    </alternativeName>
</protein>
<sequence length="281" mass="31073">MNLLLAEVAQATQRLADAGVPSPRTDAEELAAYLHGVKRGELHTVPDADFDARYWEVVARREAREPLQHITGRAYFRYLELQVGPGVFVPRPETESVVGWAIDAVRAMDVVEPCIVDLCTGSGAIALALAQEVPRSRVHAVELSEDALKWTRRNMEGSRVDLRQGDALTAFPDLDGQVDLVVSNPPYIPLTEWEYVAPEARDHDPELALFSGEDGLDLIRGLERTAHRLLRPGGVVVVEHADTQGGQVPWIFTEERGWADAADHPDLNNRPRFATARKALP</sequence>
<feature type="chain" id="PRO_0000414545" description="Release factor glutamine methyltransferase">
    <location>
        <begin position="1"/>
        <end position="281"/>
    </location>
</feature>
<feature type="region of interest" description="Disordered" evidence="2">
    <location>
        <begin position="261"/>
        <end position="281"/>
    </location>
</feature>
<feature type="binding site" evidence="1">
    <location>
        <position position="142"/>
    </location>
    <ligand>
        <name>S-adenosyl-L-methionine</name>
        <dbReference type="ChEBI" id="CHEBI:59789"/>
    </ligand>
</feature>
<feature type="binding site" evidence="1">
    <location>
        <begin position="184"/>
        <end position="187"/>
    </location>
    <ligand>
        <name>substrate</name>
    </ligand>
</feature>
<feature type="binding site" evidence="1">
    <location>
        <position position="184"/>
    </location>
    <ligand>
        <name>S-adenosyl-L-methionine</name>
        <dbReference type="ChEBI" id="CHEBI:59789"/>
    </ligand>
</feature>
<comment type="function">
    <text evidence="1">Methylates the class 1 translation termination release factors RF1/PrfA and RF2/PrfB on the glutamine residue of the universally conserved GGQ motif.</text>
</comment>
<comment type="catalytic activity">
    <reaction evidence="1">
        <text>L-glutaminyl-[peptide chain release factor] + S-adenosyl-L-methionine = N(5)-methyl-L-glutaminyl-[peptide chain release factor] + S-adenosyl-L-homocysteine + H(+)</text>
        <dbReference type="Rhea" id="RHEA:42896"/>
        <dbReference type="Rhea" id="RHEA-COMP:10271"/>
        <dbReference type="Rhea" id="RHEA-COMP:10272"/>
        <dbReference type="ChEBI" id="CHEBI:15378"/>
        <dbReference type="ChEBI" id="CHEBI:30011"/>
        <dbReference type="ChEBI" id="CHEBI:57856"/>
        <dbReference type="ChEBI" id="CHEBI:59789"/>
        <dbReference type="ChEBI" id="CHEBI:61891"/>
        <dbReference type="EC" id="2.1.1.297"/>
    </reaction>
</comment>
<comment type="similarity">
    <text evidence="1">Belongs to the protein N5-glutamine methyltransferase family. PrmC subfamily.</text>
</comment>
<organism>
    <name type="scientific">Streptomyces coelicolor (strain ATCC BAA-471 / A3(2) / M145)</name>
    <dbReference type="NCBI Taxonomy" id="100226"/>
    <lineage>
        <taxon>Bacteria</taxon>
        <taxon>Bacillati</taxon>
        <taxon>Actinomycetota</taxon>
        <taxon>Actinomycetes</taxon>
        <taxon>Kitasatosporales</taxon>
        <taxon>Streptomycetaceae</taxon>
        <taxon>Streptomyces</taxon>
        <taxon>Streptomyces albidoflavus group</taxon>
    </lineage>
</organism>